<feature type="chain" id="PRO_1000190909" description="Ketol-acid reductoisomerase (NADP(+))">
    <location>
        <begin position="1"/>
        <end position="339"/>
    </location>
</feature>
<feature type="domain" description="KARI N-terminal Rossmann" evidence="2">
    <location>
        <begin position="1"/>
        <end position="182"/>
    </location>
</feature>
<feature type="domain" description="KARI C-terminal knotted" evidence="3">
    <location>
        <begin position="183"/>
        <end position="328"/>
    </location>
</feature>
<feature type="active site" evidence="1">
    <location>
        <position position="108"/>
    </location>
</feature>
<feature type="binding site" evidence="1">
    <location>
        <begin position="24"/>
        <end position="27"/>
    </location>
    <ligand>
        <name>NADP(+)</name>
        <dbReference type="ChEBI" id="CHEBI:58349"/>
    </ligand>
</feature>
<feature type="binding site" evidence="1">
    <location>
        <position position="48"/>
    </location>
    <ligand>
        <name>NADP(+)</name>
        <dbReference type="ChEBI" id="CHEBI:58349"/>
    </ligand>
</feature>
<feature type="binding site" evidence="1">
    <location>
        <position position="51"/>
    </location>
    <ligand>
        <name>NADP(+)</name>
        <dbReference type="ChEBI" id="CHEBI:58349"/>
    </ligand>
</feature>
<feature type="binding site" evidence="1">
    <location>
        <position position="53"/>
    </location>
    <ligand>
        <name>NADP(+)</name>
        <dbReference type="ChEBI" id="CHEBI:58349"/>
    </ligand>
</feature>
<feature type="binding site" evidence="1">
    <location>
        <begin position="83"/>
        <end position="86"/>
    </location>
    <ligand>
        <name>NADP(+)</name>
        <dbReference type="ChEBI" id="CHEBI:58349"/>
    </ligand>
</feature>
<feature type="binding site" evidence="1">
    <location>
        <position position="134"/>
    </location>
    <ligand>
        <name>NADP(+)</name>
        <dbReference type="ChEBI" id="CHEBI:58349"/>
    </ligand>
</feature>
<feature type="binding site" evidence="1">
    <location>
        <position position="191"/>
    </location>
    <ligand>
        <name>Mg(2+)</name>
        <dbReference type="ChEBI" id="CHEBI:18420"/>
        <label>1</label>
    </ligand>
</feature>
<feature type="binding site" evidence="1">
    <location>
        <position position="191"/>
    </location>
    <ligand>
        <name>Mg(2+)</name>
        <dbReference type="ChEBI" id="CHEBI:18420"/>
        <label>2</label>
    </ligand>
</feature>
<feature type="binding site" evidence="1">
    <location>
        <position position="195"/>
    </location>
    <ligand>
        <name>Mg(2+)</name>
        <dbReference type="ChEBI" id="CHEBI:18420"/>
        <label>1</label>
    </ligand>
</feature>
<feature type="binding site" evidence="1">
    <location>
        <position position="227"/>
    </location>
    <ligand>
        <name>Mg(2+)</name>
        <dbReference type="ChEBI" id="CHEBI:18420"/>
        <label>2</label>
    </ligand>
</feature>
<feature type="binding site" evidence="1">
    <location>
        <position position="231"/>
    </location>
    <ligand>
        <name>Mg(2+)</name>
        <dbReference type="ChEBI" id="CHEBI:18420"/>
        <label>2</label>
    </ligand>
</feature>
<feature type="binding site" evidence="1">
    <location>
        <position position="252"/>
    </location>
    <ligand>
        <name>substrate</name>
    </ligand>
</feature>
<evidence type="ECO:0000255" key="1">
    <source>
        <dbReference type="HAMAP-Rule" id="MF_00435"/>
    </source>
</evidence>
<evidence type="ECO:0000255" key="2">
    <source>
        <dbReference type="PROSITE-ProRule" id="PRU01197"/>
    </source>
</evidence>
<evidence type="ECO:0000255" key="3">
    <source>
        <dbReference type="PROSITE-ProRule" id="PRU01198"/>
    </source>
</evidence>
<comment type="function">
    <text evidence="1">Involved in the biosynthesis of branched-chain amino acids (BCAA). Catalyzes an alkyl-migration followed by a ketol-acid reduction of (S)-2-acetolactate (S2AL) to yield (R)-2,3-dihydroxy-isovalerate. In the isomerase reaction, S2AL is rearranged via a Mg-dependent methyl migration to produce 3-hydroxy-3-methyl-2-ketobutyrate (HMKB). In the reductase reaction, this 2-ketoacid undergoes a metal-dependent reduction by NADPH to yield (R)-2,3-dihydroxy-isovalerate.</text>
</comment>
<comment type="catalytic activity">
    <reaction evidence="1">
        <text>(2R)-2,3-dihydroxy-3-methylbutanoate + NADP(+) = (2S)-2-acetolactate + NADPH + H(+)</text>
        <dbReference type="Rhea" id="RHEA:22068"/>
        <dbReference type="ChEBI" id="CHEBI:15378"/>
        <dbReference type="ChEBI" id="CHEBI:49072"/>
        <dbReference type="ChEBI" id="CHEBI:57783"/>
        <dbReference type="ChEBI" id="CHEBI:58349"/>
        <dbReference type="ChEBI" id="CHEBI:58476"/>
        <dbReference type="EC" id="1.1.1.86"/>
    </reaction>
</comment>
<comment type="catalytic activity">
    <reaction evidence="1">
        <text>(2R,3R)-2,3-dihydroxy-3-methylpentanoate + NADP(+) = (S)-2-ethyl-2-hydroxy-3-oxobutanoate + NADPH + H(+)</text>
        <dbReference type="Rhea" id="RHEA:13493"/>
        <dbReference type="ChEBI" id="CHEBI:15378"/>
        <dbReference type="ChEBI" id="CHEBI:49256"/>
        <dbReference type="ChEBI" id="CHEBI:49258"/>
        <dbReference type="ChEBI" id="CHEBI:57783"/>
        <dbReference type="ChEBI" id="CHEBI:58349"/>
        <dbReference type="EC" id="1.1.1.86"/>
    </reaction>
</comment>
<comment type="cofactor">
    <cofactor evidence="1">
        <name>Mg(2+)</name>
        <dbReference type="ChEBI" id="CHEBI:18420"/>
    </cofactor>
    <text evidence="1">Binds 2 magnesium ions per subunit.</text>
</comment>
<comment type="pathway">
    <text evidence="1">Amino-acid biosynthesis; L-isoleucine biosynthesis; L-isoleucine from 2-oxobutanoate: step 2/4.</text>
</comment>
<comment type="pathway">
    <text evidence="1">Amino-acid biosynthesis; L-valine biosynthesis; L-valine from pyruvate: step 2/4.</text>
</comment>
<comment type="similarity">
    <text evidence="1">Belongs to the ketol-acid reductoisomerase family.</text>
</comment>
<name>ILVC_BEII9</name>
<dbReference type="EC" id="1.1.1.86" evidence="1"/>
<dbReference type="EMBL" id="CP001016">
    <property type="protein sequence ID" value="ACB96027.1"/>
    <property type="molecule type" value="Genomic_DNA"/>
</dbReference>
<dbReference type="RefSeq" id="WP_012385380.1">
    <property type="nucleotide sequence ID" value="NC_010581.1"/>
</dbReference>
<dbReference type="SMR" id="B2IHY4"/>
<dbReference type="STRING" id="395963.Bind_2418"/>
<dbReference type="KEGG" id="bid:Bind_2418"/>
<dbReference type="eggNOG" id="COG0059">
    <property type="taxonomic scope" value="Bacteria"/>
</dbReference>
<dbReference type="HOGENOM" id="CLU_033821_0_1_5"/>
<dbReference type="OrthoDB" id="9804088at2"/>
<dbReference type="UniPathway" id="UPA00047">
    <property type="reaction ID" value="UER00056"/>
</dbReference>
<dbReference type="UniPathway" id="UPA00049">
    <property type="reaction ID" value="UER00060"/>
</dbReference>
<dbReference type="Proteomes" id="UP000001695">
    <property type="component" value="Chromosome"/>
</dbReference>
<dbReference type="GO" id="GO:0005829">
    <property type="term" value="C:cytosol"/>
    <property type="evidence" value="ECO:0007669"/>
    <property type="project" value="TreeGrafter"/>
</dbReference>
<dbReference type="GO" id="GO:0004455">
    <property type="term" value="F:ketol-acid reductoisomerase activity"/>
    <property type="evidence" value="ECO:0007669"/>
    <property type="project" value="UniProtKB-UniRule"/>
</dbReference>
<dbReference type="GO" id="GO:0000287">
    <property type="term" value="F:magnesium ion binding"/>
    <property type="evidence" value="ECO:0007669"/>
    <property type="project" value="UniProtKB-UniRule"/>
</dbReference>
<dbReference type="GO" id="GO:0050661">
    <property type="term" value="F:NADP binding"/>
    <property type="evidence" value="ECO:0007669"/>
    <property type="project" value="InterPro"/>
</dbReference>
<dbReference type="GO" id="GO:0009097">
    <property type="term" value="P:isoleucine biosynthetic process"/>
    <property type="evidence" value="ECO:0007669"/>
    <property type="project" value="UniProtKB-UniRule"/>
</dbReference>
<dbReference type="GO" id="GO:0009099">
    <property type="term" value="P:L-valine biosynthetic process"/>
    <property type="evidence" value="ECO:0007669"/>
    <property type="project" value="UniProtKB-UniRule"/>
</dbReference>
<dbReference type="FunFam" id="3.40.50.720:FF:000023">
    <property type="entry name" value="Ketol-acid reductoisomerase (NADP(+))"/>
    <property type="match status" value="1"/>
</dbReference>
<dbReference type="Gene3D" id="6.10.240.10">
    <property type="match status" value="1"/>
</dbReference>
<dbReference type="Gene3D" id="3.40.50.720">
    <property type="entry name" value="NAD(P)-binding Rossmann-like Domain"/>
    <property type="match status" value="1"/>
</dbReference>
<dbReference type="HAMAP" id="MF_00435">
    <property type="entry name" value="IlvC"/>
    <property type="match status" value="1"/>
</dbReference>
<dbReference type="InterPro" id="IPR008927">
    <property type="entry name" value="6-PGluconate_DH-like_C_sf"/>
</dbReference>
<dbReference type="InterPro" id="IPR013023">
    <property type="entry name" value="KARI"/>
</dbReference>
<dbReference type="InterPro" id="IPR000506">
    <property type="entry name" value="KARI_C"/>
</dbReference>
<dbReference type="InterPro" id="IPR013116">
    <property type="entry name" value="KARI_N"/>
</dbReference>
<dbReference type="InterPro" id="IPR014359">
    <property type="entry name" value="KARI_prok"/>
</dbReference>
<dbReference type="InterPro" id="IPR036291">
    <property type="entry name" value="NAD(P)-bd_dom_sf"/>
</dbReference>
<dbReference type="NCBIfam" id="TIGR00465">
    <property type="entry name" value="ilvC"/>
    <property type="match status" value="1"/>
</dbReference>
<dbReference type="NCBIfam" id="NF004017">
    <property type="entry name" value="PRK05479.1"/>
    <property type="match status" value="1"/>
</dbReference>
<dbReference type="NCBIfam" id="NF009940">
    <property type="entry name" value="PRK13403.1"/>
    <property type="match status" value="1"/>
</dbReference>
<dbReference type="PANTHER" id="PTHR21371">
    <property type="entry name" value="KETOL-ACID REDUCTOISOMERASE, MITOCHONDRIAL"/>
    <property type="match status" value="1"/>
</dbReference>
<dbReference type="PANTHER" id="PTHR21371:SF1">
    <property type="entry name" value="KETOL-ACID REDUCTOISOMERASE, MITOCHONDRIAL"/>
    <property type="match status" value="1"/>
</dbReference>
<dbReference type="Pfam" id="PF01450">
    <property type="entry name" value="KARI_C"/>
    <property type="match status" value="1"/>
</dbReference>
<dbReference type="Pfam" id="PF07991">
    <property type="entry name" value="KARI_N"/>
    <property type="match status" value="1"/>
</dbReference>
<dbReference type="PIRSF" id="PIRSF000116">
    <property type="entry name" value="IlvC_gammaproteo"/>
    <property type="match status" value="1"/>
</dbReference>
<dbReference type="SUPFAM" id="SSF48179">
    <property type="entry name" value="6-phosphogluconate dehydrogenase C-terminal domain-like"/>
    <property type="match status" value="1"/>
</dbReference>
<dbReference type="SUPFAM" id="SSF51735">
    <property type="entry name" value="NAD(P)-binding Rossmann-fold domains"/>
    <property type="match status" value="1"/>
</dbReference>
<dbReference type="PROSITE" id="PS51851">
    <property type="entry name" value="KARI_C"/>
    <property type="match status" value="1"/>
</dbReference>
<dbReference type="PROSITE" id="PS51850">
    <property type="entry name" value="KARI_N"/>
    <property type="match status" value="1"/>
</dbReference>
<sequence length="339" mass="36727">MRVYYDRDADINLVKGKKVAIIGYGSQGHAHALNLRDSGVKEIAIALREGSSTAKKAEAEGLTVKTVVDAAQWADVVMVLTPDELQADIYHQLLAKNLKQGAALLFAHGLSVHFNLIEPRADLDVLMVAPKGPGHTVRSEYKRGGGVPCLIAVAQNASGNAHDIALSYASAIGGGRAGIIETTFKEECETDLFGEQAVLCGGLVELIRAGFETLVEAGYAPEMAYFECLHEVKLIVDLIYEGGIANMNYSISNTAEYGEYVTGPRIITPETKAEMKRVLEDIQGGKFTRDWMLENKVHQTSFKATRAKVAAHPIEKVGAELRAMMPWIGASKLVDKSKN</sequence>
<accession>B2IHY4</accession>
<protein>
    <recommendedName>
        <fullName evidence="1">Ketol-acid reductoisomerase (NADP(+))</fullName>
        <shortName evidence="1">KARI</shortName>
        <ecNumber evidence="1">1.1.1.86</ecNumber>
    </recommendedName>
    <alternativeName>
        <fullName evidence="1">Acetohydroxy-acid isomeroreductase</fullName>
        <shortName evidence="1">AHIR</shortName>
    </alternativeName>
    <alternativeName>
        <fullName evidence="1">Alpha-keto-beta-hydroxylacyl reductoisomerase</fullName>
    </alternativeName>
    <alternativeName>
        <fullName evidence="1">Ketol-acid reductoisomerase type 1</fullName>
    </alternativeName>
    <alternativeName>
        <fullName evidence="1">Ketol-acid reductoisomerase type I</fullName>
    </alternativeName>
</protein>
<keyword id="KW-0028">Amino-acid biosynthesis</keyword>
<keyword id="KW-0100">Branched-chain amino acid biosynthesis</keyword>
<keyword id="KW-0460">Magnesium</keyword>
<keyword id="KW-0479">Metal-binding</keyword>
<keyword id="KW-0521">NADP</keyword>
<keyword id="KW-0560">Oxidoreductase</keyword>
<keyword id="KW-1185">Reference proteome</keyword>
<reference key="1">
    <citation type="journal article" date="2010" name="J. Bacteriol.">
        <title>Complete genome sequence of Beijerinckia indica subsp. indica.</title>
        <authorList>
            <person name="Tamas I."/>
            <person name="Dedysh S.N."/>
            <person name="Liesack W."/>
            <person name="Stott M.B."/>
            <person name="Alam M."/>
            <person name="Murrell J.C."/>
            <person name="Dunfield P.F."/>
        </authorList>
    </citation>
    <scope>NUCLEOTIDE SEQUENCE [LARGE SCALE GENOMIC DNA]</scope>
    <source>
        <strain>ATCC 9039 / DSM 1715 / NCIMB 8712</strain>
    </source>
</reference>
<proteinExistence type="inferred from homology"/>
<gene>
    <name evidence="1" type="primary">ilvC</name>
    <name type="ordered locus">Bind_2418</name>
</gene>
<organism>
    <name type="scientific">Beijerinckia indica subsp. indica (strain ATCC 9039 / DSM 1715 / NCIMB 8712)</name>
    <dbReference type="NCBI Taxonomy" id="395963"/>
    <lineage>
        <taxon>Bacteria</taxon>
        <taxon>Pseudomonadati</taxon>
        <taxon>Pseudomonadota</taxon>
        <taxon>Alphaproteobacteria</taxon>
        <taxon>Hyphomicrobiales</taxon>
        <taxon>Beijerinckiaceae</taxon>
        <taxon>Beijerinckia</taxon>
    </lineage>
</organism>